<reference key="1">
    <citation type="submission" date="2007-07" db="EMBL/GenBank/DDBJ databases">
        <title>Complete genome sequence of Campylobacter hominis ATCC BAA-381, a commensal isolated from the human gastrointestinal tract.</title>
        <authorList>
            <person name="Fouts D.E."/>
            <person name="Mongodin E.F."/>
            <person name="Puiu D."/>
            <person name="Sebastian Y."/>
            <person name="Miller W.G."/>
            <person name="Mandrell R.E."/>
            <person name="Nelson K.E."/>
        </authorList>
    </citation>
    <scope>NUCLEOTIDE SEQUENCE [LARGE SCALE GENOMIC DNA]</scope>
    <source>
        <strain>ATCC BAA-381 / DSM 21671 / CCUG 45161 / LMG 19568 / NCTC 13146 / CH001A</strain>
    </source>
</reference>
<accession>A7I064</accession>
<evidence type="ECO:0000255" key="1">
    <source>
        <dbReference type="HAMAP-Rule" id="MF_00076"/>
    </source>
</evidence>
<gene>
    <name evidence="1" type="primary">hisB</name>
    <name type="ordered locus">CHAB381_0302</name>
</gene>
<proteinExistence type="inferred from homology"/>
<protein>
    <recommendedName>
        <fullName evidence="1">Imidazoleglycerol-phosphate dehydratase</fullName>
        <shortName evidence="1">IGPD</shortName>
        <ecNumber evidence="1">4.2.1.19</ecNumber>
    </recommendedName>
</protein>
<sequence length="190" mass="21129">MIKKYRKTKETEISVELEICGSGNAEIDTGIGFFDHMLESFTKHSLIDLKLICKGDLNVDFHHSVEDCGIVLGSALREAIYPIKKIERFGDSVVVMDEAAFSCALDLSNRAFLVFEGPKVGKVGEFDIELLEEFFRAVAFNAGITLHLIKLRGQNLHHLSEAAFKSFAVALRRALSKNERAEIPSTKGIL</sequence>
<comment type="catalytic activity">
    <reaction evidence="1">
        <text>D-erythro-1-(imidazol-4-yl)glycerol 3-phosphate = 3-(imidazol-4-yl)-2-oxopropyl phosphate + H2O</text>
        <dbReference type="Rhea" id="RHEA:11040"/>
        <dbReference type="ChEBI" id="CHEBI:15377"/>
        <dbReference type="ChEBI" id="CHEBI:57766"/>
        <dbReference type="ChEBI" id="CHEBI:58278"/>
        <dbReference type="EC" id="4.2.1.19"/>
    </reaction>
</comment>
<comment type="pathway">
    <text evidence="1">Amino-acid biosynthesis; L-histidine biosynthesis; L-histidine from 5-phospho-alpha-D-ribose 1-diphosphate: step 6/9.</text>
</comment>
<comment type="subcellular location">
    <subcellularLocation>
        <location evidence="1">Cytoplasm</location>
    </subcellularLocation>
</comment>
<comment type="similarity">
    <text evidence="1">Belongs to the imidazoleglycerol-phosphate dehydratase family.</text>
</comment>
<organism>
    <name type="scientific">Campylobacter hominis (strain ATCC BAA-381 / DSM 21671 / CCUG 45161 / LMG 19568 / NCTC 13146 / CH001A)</name>
    <dbReference type="NCBI Taxonomy" id="360107"/>
    <lineage>
        <taxon>Bacteria</taxon>
        <taxon>Pseudomonadati</taxon>
        <taxon>Campylobacterota</taxon>
        <taxon>Epsilonproteobacteria</taxon>
        <taxon>Campylobacterales</taxon>
        <taxon>Campylobacteraceae</taxon>
        <taxon>Campylobacter</taxon>
    </lineage>
</organism>
<feature type="chain" id="PRO_1000010266" description="Imidazoleglycerol-phosphate dehydratase">
    <location>
        <begin position="1"/>
        <end position="190"/>
    </location>
</feature>
<keyword id="KW-0028">Amino-acid biosynthesis</keyword>
<keyword id="KW-0963">Cytoplasm</keyword>
<keyword id="KW-0368">Histidine biosynthesis</keyword>
<keyword id="KW-0456">Lyase</keyword>
<keyword id="KW-1185">Reference proteome</keyword>
<name>HIS7_CAMHC</name>
<dbReference type="EC" id="4.2.1.19" evidence="1"/>
<dbReference type="EMBL" id="CP000776">
    <property type="protein sequence ID" value="ABS52215.1"/>
    <property type="molecule type" value="Genomic_DNA"/>
</dbReference>
<dbReference type="RefSeq" id="WP_012108187.1">
    <property type="nucleotide sequence ID" value="NC_009714.1"/>
</dbReference>
<dbReference type="SMR" id="A7I064"/>
<dbReference type="STRING" id="360107.CHAB381_0302"/>
<dbReference type="KEGG" id="cha:CHAB381_0302"/>
<dbReference type="eggNOG" id="COG0131">
    <property type="taxonomic scope" value="Bacteria"/>
</dbReference>
<dbReference type="HOGENOM" id="CLU_044308_2_0_7"/>
<dbReference type="OrthoDB" id="9790411at2"/>
<dbReference type="UniPathway" id="UPA00031">
    <property type="reaction ID" value="UER00011"/>
</dbReference>
<dbReference type="Proteomes" id="UP000002407">
    <property type="component" value="Chromosome"/>
</dbReference>
<dbReference type="GO" id="GO:0005737">
    <property type="term" value="C:cytoplasm"/>
    <property type="evidence" value="ECO:0007669"/>
    <property type="project" value="UniProtKB-SubCell"/>
</dbReference>
<dbReference type="GO" id="GO:0004424">
    <property type="term" value="F:imidazoleglycerol-phosphate dehydratase activity"/>
    <property type="evidence" value="ECO:0007669"/>
    <property type="project" value="UniProtKB-UniRule"/>
</dbReference>
<dbReference type="GO" id="GO:0000105">
    <property type="term" value="P:L-histidine biosynthetic process"/>
    <property type="evidence" value="ECO:0007669"/>
    <property type="project" value="UniProtKB-UniRule"/>
</dbReference>
<dbReference type="CDD" id="cd07914">
    <property type="entry name" value="IGPD"/>
    <property type="match status" value="1"/>
</dbReference>
<dbReference type="FunFam" id="3.30.230.40:FF:000001">
    <property type="entry name" value="Imidazoleglycerol-phosphate dehydratase HisB"/>
    <property type="match status" value="1"/>
</dbReference>
<dbReference type="FunFam" id="3.30.230.40:FF:000003">
    <property type="entry name" value="Imidazoleglycerol-phosphate dehydratase HisB"/>
    <property type="match status" value="1"/>
</dbReference>
<dbReference type="Gene3D" id="3.30.230.40">
    <property type="entry name" value="Imidazole glycerol phosphate dehydratase, domain 1"/>
    <property type="match status" value="2"/>
</dbReference>
<dbReference type="HAMAP" id="MF_00076">
    <property type="entry name" value="HisB"/>
    <property type="match status" value="1"/>
</dbReference>
<dbReference type="InterPro" id="IPR038494">
    <property type="entry name" value="IGPD_sf"/>
</dbReference>
<dbReference type="InterPro" id="IPR000807">
    <property type="entry name" value="ImidazoleglycerolP_deHydtase"/>
</dbReference>
<dbReference type="InterPro" id="IPR020565">
    <property type="entry name" value="ImidazoleglycerP_deHydtase_CS"/>
</dbReference>
<dbReference type="InterPro" id="IPR020568">
    <property type="entry name" value="Ribosomal_Su5_D2-typ_SF"/>
</dbReference>
<dbReference type="NCBIfam" id="NF002111">
    <property type="entry name" value="PRK00951.2-1"/>
    <property type="match status" value="1"/>
</dbReference>
<dbReference type="NCBIfam" id="NF002114">
    <property type="entry name" value="PRK00951.2-4"/>
    <property type="match status" value="1"/>
</dbReference>
<dbReference type="PANTHER" id="PTHR23133:SF2">
    <property type="entry name" value="IMIDAZOLEGLYCEROL-PHOSPHATE DEHYDRATASE"/>
    <property type="match status" value="1"/>
</dbReference>
<dbReference type="PANTHER" id="PTHR23133">
    <property type="entry name" value="IMIDAZOLEGLYCEROL-PHOSPHATE DEHYDRATASE HIS7"/>
    <property type="match status" value="1"/>
</dbReference>
<dbReference type="Pfam" id="PF00475">
    <property type="entry name" value="IGPD"/>
    <property type="match status" value="1"/>
</dbReference>
<dbReference type="SUPFAM" id="SSF54211">
    <property type="entry name" value="Ribosomal protein S5 domain 2-like"/>
    <property type="match status" value="2"/>
</dbReference>
<dbReference type="PROSITE" id="PS00954">
    <property type="entry name" value="IGP_DEHYDRATASE_1"/>
    <property type="match status" value="1"/>
</dbReference>
<dbReference type="PROSITE" id="PS00955">
    <property type="entry name" value="IGP_DEHYDRATASE_2"/>
    <property type="match status" value="1"/>
</dbReference>